<name>ATPA_THAPS</name>
<geneLocation type="chloroplast"/>
<gene>
    <name evidence="1" type="primary">atpA</name>
</gene>
<proteinExistence type="inferred from homology"/>
<comment type="function">
    <text evidence="1">Produces ATP from ADP in the presence of a proton gradient across the membrane. The alpha chain is a regulatory subunit.</text>
</comment>
<comment type="catalytic activity">
    <reaction evidence="1">
        <text>ATP + H2O + 4 H(+)(in) = ADP + phosphate + 5 H(+)(out)</text>
        <dbReference type="Rhea" id="RHEA:57720"/>
        <dbReference type="ChEBI" id="CHEBI:15377"/>
        <dbReference type="ChEBI" id="CHEBI:15378"/>
        <dbReference type="ChEBI" id="CHEBI:30616"/>
        <dbReference type="ChEBI" id="CHEBI:43474"/>
        <dbReference type="ChEBI" id="CHEBI:456216"/>
        <dbReference type="EC" id="7.1.2.2"/>
    </reaction>
</comment>
<comment type="subunit">
    <text evidence="1">F-type ATPases have 2 components, CF(1) - the catalytic core - and CF(0) - the membrane proton channel. CF(1) has five subunits: alpha(3), beta(3), gamma(1), delta(1), epsilon(1). CF(0) has four main subunits: a, b, b' and c.</text>
</comment>
<comment type="subcellular location">
    <subcellularLocation>
        <location evidence="1">Plastid</location>
        <location evidence="1">Chloroplast thylakoid membrane</location>
        <topology evidence="1">Peripheral membrane protein</topology>
    </subcellularLocation>
</comment>
<comment type="similarity">
    <text evidence="1">Belongs to the ATPase alpha/beta chains family.</text>
</comment>
<reference key="1">
    <citation type="journal article" date="2007" name="Mol. Genet. Genomics">
        <title>Chloroplast genomes of the diatoms Phaeodactylum tricornutum and Thalassiosira pseudonana: comparison with other plastid genomes of the red lineage.</title>
        <authorList>
            <person name="Oudot-Le Secq M.-P."/>
            <person name="Grimwood J."/>
            <person name="Shapiro H."/>
            <person name="Armbrust E.V."/>
            <person name="Bowler C."/>
            <person name="Green B.R."/>
        </authorList>
    </citation>
    <scope>NUCLEOTIDE SEQUENCE [LARGE SCALE GENOMIC DNA]</scope>
    <source>
        <strain>CCMP1335 / NEPCC58 / CCAP 1085/12</strain>
    </source>
</reference>
<feature type="chain" id="PRO_0000275176" description="ATP synthase subunit alpha, chloroplastic">
    <location>
        <begin position="1"/>
        <end position="503"/>
    </location>
</feature>
<feature type="binding site" evidence="1">
    <location>
        <begin position="170"/>
        <end position="177"/>
    </location>
    <ligand>
        <name>ATP</name>
        <dbReference type="ChEBI" id="CHEBI:30616"/>
    </ligand>
</feature>
<feature type="site" description="Required for activity" evidence="1">
    <location>
        <position position="363"/>
    </location>
</feature>
<evidence type="ECO:0000255" key="1">
    <source>
        <dbReference type="HAMAP-Rule" id="MF_01346"/>
    </source>
</evidence>
<protein>
    <recommendedName>
        <fullName evidence="1">ATP synthase subunit alpha, chloroplastic</fullName>
        <ecNumber evidence="1">7.1.2.2</ecNumber>
    </recommendedName>
    <alternativeName>
        <fullName evidence="1">ATP synthase F1 sector subunit alpha</fullName>
    </alternativeName>
    <alternativeName>
        <fullName evidence="1">F-ATPase subunit alpha</fullName>
    </alternativeName>
</protein>
<organism>
    <name type="scientific">Thalassiosira pseudonana</name>
    <name type="common">Marine diatom</name>
    <name type="synonym">Cyclotella nana</name>
    <dbReference type="NCBI Taxonomy" id="35128"/>
    <lineage>
        <taxon>Eukaryota</taxon>
        <taxon>Sar</taxon>
        <taxon>Stramenopiles</taxon>
        <taxon>Ochrophyta</taxon>
        <taxon>Bacillariophyta</taxon>
        <taxon>Coscinodiscophyceae</taxon>
        <taxon>Thalassiosirophycidae</taxon>
        <taxon>Thalassiosirales</taxon>
        <taxon>Thalassiosiraceae</taxon>
        <taxon>Thalassiosira</taxon>
    </lineage>
</organism>
<accession>A0T0P4</accession>
<dbReference type="EC" id="7.1.2.2" evidence="1"/>
<dbReference type="EMBL" id="EF067921">
    <property type="protein sequence ID" value="ABK20729.1"/>
    <property type="molecule type" value="Genomic_DNA"/>
</dbReference>
<dbReference type="RefSeq" id="YP_874506.1">
    <property type="nucleotide sequence ID" value="NC_008589.1"/>
</dbReference>
<dbReference type="SMR" id="A0T0P4"/>
<dbReference type="STRING" id="35128.A0T0P4"/>
<dbReference type="PaxDb" id="35128-Thapsdraft1287"/>
<dbReference type="GeneID" id="4524801"/>
<dbReference type="eggNOG" id="KOG1353">
    <property type="taxonomic scope" value="Eukaryota"/>
</dbReference>
<dbReference type="InParanoid" id="A0T0P4"/>
<dbReference type="OMA" id="CEYEPEN"/>
<dbReference type="GO" id="GO:0009535">
    <property type="term" value="C:chloroplast thylakoid membrane"/>
    <property type="evidence" value="ECO:0007669"/>
    <property type="project" value="UniProtKB-SubCell"/>
</dbReference>
<dbReference type="GO" id="GO:0045259">
    <property type="term" value="C:proton-transporting ATP synthase complex"/>
    <property type="evidence" value="ECO:0007669"/>
    <property type="project" value="UniProtKB-KW"/>
</dbReference>
<dbReference type="GO" id="GO:0043531">
    <property type="term" value="F:ADP binding"/>
    <property type="evidence" value="ECO:0000318"/>
    <property type="project" value="GO_Central"/>
</dbReference>
<dbReference type="GO" id="GO:0005524">
    <property type="term" value="F:ATP binding"/>
    <property type="evidence" value="ECO:0000318"/>
    <property type="project" value="GO_Central"/>
</dbReference>
<dbReference type="GO" id="GO:0046933">
    <property type="term" value="F:proton-transporting ATP synthase activity, rotational mechanism"/>
    <property type="evidence" value="ECO:0007669"/>
    <property type="project" value="UniProtKB-UniRule"/>
</dbReference>
<dbReference type="GO" id="GO:0015986">
    <property type="term" value="P:proton motive force-driven ATP synthesis"/>
    <property type="evidence" value="ECO:0000318"/>
    <property type="project" value="GO_Central"/>
</dbReference>
<dbReference type="CDD" id="cd18113">
    <property type="entry name" value="ATP-synt_F1_alpha_C"/>
    <property type="match status" value="1"/>
</dbReference>
<dbReference type="CDD" id="cd18116">
    <property type="entry name" value="ATP-synt_F1_alpha_N"/>
    <property type="match status" value="1"/>
</dbReference>
<dbReference type="CDD" id="cd01132">
    <property type="entry name" value="F1-ATPase_alpha_CD"/>
    <property type="match status" value="1"/>
</dbReference>
<dbReference type="FunFam" id="1.20.150.20:FF:000001">
    <property type="entry name" value="ATP synthase subunit alpha"/>
    <property type="match status" value="1"/>
</dbReference>
<dbReference type="FunFam" id="2.40.30.20:FF:000001">
    <property type="entry name" value="ATP synthase subunit alpha"/>
    <property type="match status" value="1"/>
</dbReference>
<dbReference type="FunFam" id="3.40.50.300:FF:000002">
    <property type="entry name" value="ATP synthase subunit alpha"/>
    <property type="match status" value="1"/>
</dbReference>
<dbReference type="Gene3D" id="2.40.30.20">
    <property type="match status" value="1"/>
</dbReference>
<dbReference type="Gene3D" id="1.20.150.20">
    <property type="entry name" value="ATP synthase alpha/beta chain, C-terminal domain"/>
    <property type="match status" value="1"/>
</dbReference>
<dbReference type="Gene3D" id="3.40.50.300">
    <property type="entry name" value="P-loop containing nucleotide triphosphate hydrolases"/>
    <property type="match status" value="1"/>
</dbReference>
<dbReference type="HAMAP" id="MF_01346">
    <property type="entry name" value="ATP_synth_alpha_bact"/>
    <property type="match status" value="1"/>
</dbReference>
<dbReference type="InterPro" id="IPR023366">
    <property type="entry name" value="ATP_synth_asu-like_sf"/>
</dbReference>
<dbReference type="InterPro" id="IPR000793">
    <property type="entry name" value="ATP_synth_asu_C"/>
</dbReference>
<dbReference type="InterPro" id="IPR038376">
    <property type="entry name" value="ATP_synth_asu_C_sf"/>
</dbReference>
<dbReference type="InterPro" id="IPR033732">
    <property type="entry name" value="ATP_synth_F1_a_nt-bd_dom"/>
</dbReference>
<dbReference type="InterPro" id="IPR005294">
    <property type="entry name" value="ATP_synth_F1_asu"/>
</dbReference>
<dbReference type="InterPro" id="IPR020003">
    <property type="entry name" value="ATPase_a/bsu_AS"/>
</dbReference>
<dbReference type="InterPro" id="IPR004100">
    <property type="entry name" value="ATPase_F1/V1/A1_a/bsu_N"/>
</dbReference>
<dbReference type="InterPro" id="IPR036121">
    <property type="entry name" value="ATPase_F1/V1/A1_a/bsu_N_sf"/>
</dbReference>
<dbReference type="InterPro" id="IPR000194">
    <property type="entry name" value="ATPase_F1/V1/A1_a/bsu_nucl-bd"/>
</dbReference>
<dbReference type="InterPro" id="IPR027417">
    <property type="entry name" value="P-loop_NTPase"/>
</dbReference>
<dbReference type="NCBIfam" id="TIGR00962">
    <property type="entry name" value="atpA"/>
    <property type="match status" value="1"/>
</dbReference>
<dbReference type="NCBIfam" id="NF009884">
    <property type="entry name" value="PRK13343.1"/>
    <property type="match status" value="1"/>
</dbReference>
<dbReference type="PANTHER" id="PTHR48082">
    <property type="entry name" value="ATP SYNTHASE SUBUNIT ALPHA, MITOCHONDRIAL"/>
    <property type="match status" value="1"/>
</dbReference>
<dbReference type="PANTHER" id="PTHR48082:SF2">
    <property type="entry name" value="ATP SYNTHASE SUBUNIT ALPHA, MITOCHONDRIAL"/>
    <property type="match status" value="1"/>
</dbReference>
<dbReference type="Pfam" id="PF00006">
    <property type="entry name" value="ATP-synt_ab"/>
    <property type="match status" value="1"/>
</dbReference>
<dbReference type="Pfam" id="PF00306">
    <property type="entry name" value="ATP-synt_ab_C"/>
    <property type="match status" value="1"/>
</dbReference>
<dbReference type="Pfam" id="PF02874">
    <property type="entry name" value="ATP-synt_ab_N"/>
    <property type="match status" value="1"/>
</dbReference>
<dbReference type="PIRSF" id="PIRSF039088">
    <property type="entry name" value="F_ATPase_subunit_alpha"/>
    <property type="match status" value="1"/>
</dbReference>
<dbReference type="SUPFAM" id="SSF47917">
    <property type="entry name" value="C-terminal domain of alpha and beta subunits of F1 ATP synthase"/>
    <property type="match status" value="1"/>
</dbReference>
<dbReference type="SUPFAM" id="SSF50615">
    <property type="entry name" value="N-terminal domain of alpha and beta subunits of F1 ATP synthase"/>
    <property type="match status" value="1"/>
</dbReference>
<dbReference type="SUPFAM" id="SSF52540">
    <property type="entry name" value="P-loop containing nucleoside triphosphate hydrolases"/>
    <property type="match status" value="1"/>
</dbReference>
<dbReference type="PROSITE" id="PS00152">
    <property type="entry name" value="ATPASE_ALPHA_BETA"/>
    <property type="match status" value="1"/>
</dbReference>
<sequence>MINIRPDEISSIIREQIEQYDQDVKIDNIGTVLQVGDGIARVYGLDQVMSGELLEFEDKTIGIALNLENDNVGVVLMGNGRQILEGGSVKSTGQIAQIPVGEAFLGRVVNPLGAPIDGKGDIASTETRLVESMAPGIISRKSVCEPLQTGITSIDAMIPIGRGQRELIIGDRQTGKTSIAVDTIINQKTEDVVCVYVGIGQKASTIAQVVNVLDEKEAMAYTIIVSASANDPATLQYIAPYSGAALAEYFMYNGKATLIVYDDLTKQAMAYRQMSLLLRRPPGREAYPGDVFYLHSRLLERAAKLSDALGGGSMTALPIIETQASDVSAYIPTNVISITDGQIFLSNDLFNSGIRPAINVGISVSRVGSAAQTKAMKQVAGKLKLELAQFAELEAFSQFASDLDEATQKQLARGTRLREILKQPQNSPLSVAQQVALIYAGINGFLDNLAVSDVKKFSASLIQTLASQKSYIDVVGKTNQFTEEAETLLKEAIASTKTGFATL</sequence>
<keyword id="KW-0066">ATP synthesis</keyword>
<keyword id="KW-0067">ATP-binding</keyword>
<keyword id="KW-0139">CF(1)</keyword>
<keyword id="KW-0150">Chloroplast</keyword>
<keyword id="KW-0375">Hydrogen ion transport</keyword>
<keyword id="KW-0406">Ion transport</keyword>
<keyword id="KW-0472">Membrane</keyword>
<keyword id="KW-0547">Nucleotide-binding</keyword>
<keyword id="KW-0934">Plastid</keyword>
<keyword id="KW-0793">Thylakoid</keyword>
<keyword id="KW-1278">Translocase</keyword>
<keyword id="KW-0813">Transport</keyword>